<organism>
    <name type="scientific">Shewanella sp. (strain MR-4)</name>
    <dbReference type="NCBI Taxonomy" id="60480"/>
    <lineage>
        <taxon>Bacteria</taxon>
        <taxon>Pseudomonadati</taxon>
        <taxon>Pseudomonadota</taxon>
        <taxon>Gammaproteobacteria</taxon>
        <taxon>Alteromonadales</taxon>
        <taxon>Shewanellaceae</taxon>
        <taxon>Shewanella</taxon>
    </lineage>
</organism>
<proteinExistence type="inferred from homology"/>
<feature type="chain" id="PRO_1000050887" description="D-aminoacyl-tRNA deacylase">
    <location>
        <begin position="1"/>
        <end position="145"/>
    </location>
</feature>
<feature type="short sequence motif" description="Gly-cisPro motif, important for rejection of L-amino acids" evidence="1">
    <location>
        <begin position="137"/>
        <end position="138"/>
    </location>
</feature>
<name>DTD_SHESM</name>
<gene>
    <name evidence="1" type="primary">dtd</name>
    <name type="ordered locus">Shewmr4_0319</name>
</gene>
<reference key="1">
    <citation type="submission" date="2006-08" db="EMBL/GenBank/DDBJ databases">
        <title>Complete sequence of Shewanella sp. MR-4.</title>
        <authorList>
            <consortium name="US DOE Joint Genome Institute"/>
            <person name="Copeland A."/>
            <person name="Lucas S."/>
            <person name="Lapidus A."/>
            <person name="Barry K."/>
            <person name="Detter J.C."/>
            <person name="Glavina del Rio T."/>
            <person name="Hammon N."/>
            <person name="Israni S."/>
            <person name="Dalin E."/>
            <person name="Tice H."/>
            <person name="Pitluck S."/>
            <person name="Kiss H."/>
            <person name="Brettin T."/>
            <person name="Bruce D."/>
            <person name="Han C."/>
            <person name="Tapia R."/>
            <person name="Gilna P."/>
            <person name="Schmutz J."/>
            <person name="Larimer F."/>
            <person name="Land M."/>
            <person name="Hauser L."/>
            <person name="Kyrpides N."/>
            <person name="Mikhailova N."/>
            <person name="Nealson K."/>
            <person name="Konstantinidis K."/>
            <person name="Klappenbach J."/>
            <person name="Tiedje J."/>
            <person name="Richardson P."/>
        </authorList>
    </citation>
    <scope>NUCLEOTIDE SEQUENCE [LARGE SCALE GENOMIC DNA]</scope>
    <source>
        <strain>MR-4</strain>
    </source>
</reference>
<evidence type="ECO:0000255" key="1">
    <source>
        <dbReference type="HAMAP-Rule" id="MF_00518"/>
    </source>
</evidence>
<keyword id="KW-0963">Cytoplasm</keyword>
<keyword id="KW-0378">Hydrolase</keyword>
<keyword id="KW-0694">RNA-binding</keyword>
<keyword id="KW-0820">tRNA-binding</keyword>
<accession>Q0HNG8</accession>
<protein>
    <recommendedName>
        <fullName evidence="1">D-aminoacyl-tRNA deacylase</fullName>
        <shortName evidence="1">DTD</shortName>
        <ecNumber evidence="1">3.1.1.96</ecNumber>
    </recommendedName>
    <alternativeName>
        <fullName evidence="1">Gly-tRNA(Ala) deacylase</fullName>
    </alternativeName>
</protein>
<sequence length="145" mass="15630">MIALIQRVSRASVVVDNQTIGAIDKGLLVLLGVEREDNREKMEKLATKVMSYRVFSDENGKMNLNLTQAGGSLLVVSQFTLAADTGRGLRPSFSGAGTPEQALGLYEEFVAFCRAQGVTTETGQFGADMKVELVNDGPVTFNLQV</sequence>
<dbReference type="EC" id="3.1.1.96" evidence="1"/>
<dbReference type="EMBL" id="CP000446">
    <property type="protein sequence ID" value="ABI37399.1"/>
    <property type="molecule type" value="Genomic_DNA"/>
</dbReference>
<dbReference type="RefSeq" id="WP_011621125.1">
    <property type="nucleotide sequence ID" value="NC_008321.1"/>
</dbReference>
<dbReference type="SMR" id="Q0HNG8"/>
<dbReference type="KEGG" id="she:Shewmr4_0319"/>
<dbReference type="HOGENOM" id="CLU_076901_1_0_6"/>
<dbReference type="GO" id="GO:0005737">
    <property type="term" value="C:cytoplasm"/>
    <property type="evidence" value="ECO:0007669"/>
    <property type="project" value="UniProtKB-SubCell"/>
</dbReference>
<dbReference type="GO" id="GO:0051500">
    <property type="term" value="F:D-tyrosyl-tRNA(Tyr) deacylase activity"/>
    <property type="evidence" value="ECO:0007669"/>
    <property type="project" value="TreeGrafter"/>
</dbReference>
<dbReference type="GO" id="GO:0106026">
    <property type="term" value="F:Gly-tRNA(Ala) deacylase activity"/>
    <property type="evidence" value="ECO:0007669"/>
    <property type="project" value="UniProtKB-UniRule"/>
</dbReference>
<dbReference type="GO" id="GO:0043908">
    <property type="term" value="F:Ser(Gly)-tRNA(Ala) hydrolase activity"/>
    <property type="evidence" value="ECO:0007669"/>
    <property type="project" value="UniProtKB-UniRule"/>
</dbReference>
<dbReference type="GO" id="GO:0000049">
    <property type="term" value="F:tRNA binding"/>
    <property type="evidence" value="ECO:0007669"/>
    <property type="project" value="UniProtKB-UniRule"/>
</dbReference>
<dbReference type="GO" id="GO:0019478">
    <property type="term" value="P:D-amino acid catabolic process"/>
    <property type="evidence" value="ECO:0007669"/>
    <property type="project" value="UniProtKB-UniRule"/>
</dbReference>
<dbReference type="CDD" id="cd00563">
    <property type="entry name" value="Dtyr_deacylase"/>
    <property type="match status" value="1"/>
</dbReference>
<dbReference type="FunFam" id="3.50.80.10:FF:000001">
    <property type="entry name" value="D-aminoacyl-tRNA deacylase"/>
    <property type="match status" value="1"/>
</dbReference>
<dbReference type="Gene3D" id="3.50.80.10">
    <property type="entry name" value="D-tyrosyl-tRNA(Tyr) deacylase"/>
    <property type="match status" value="1"/>
</dbReference>
<dbReference type="HAMAP" id="MF_00518">
    <property type="entry name" value="Deacylase_Dtd"/>
    <property type="match status" value="1"/>
</dbReference>
<dbReference type="InterPro" id="IPR003732">
    <property type="entry name" value="Daa-tRNA_deacyls_DTD"/>
</dbReference>
<dbReference type="InterPro" id="IPR023509">
    <property type="entry name" value="DTD-like_sf"/>
</dbReference>
<dbReference type="NCBIfam" id="TIGR00256">
    <property type="entry name" value="D-aminoacyl-tRNA deacylase"/>
    <property type="match status" value="1"/>
</dbReference>
<dbReference type="PANTHER" id="PTHR10472:SF5">
    <property type="entry name" value="D-AMINOACYL-TRNA DEACYLASE 1"/>
    <property type="match status" value="1"/>
</dbReference>
<dbReference type="PANTHER" id="PTHR10472">
    <property type="entry name" value="D-TYROSYL-TRNA TYR DEACYLASE"/>
    <property type="match status" value="1"/>
</dbReference>
<dbReference type="Pfam" id="PF02580">
    <property type="entry name" value="Tyr_Deacylase"/>
    <property type="match status" value="1"/>
</dbReference>
<dbReference type="SUPFAM" id="SSF69500">
    <property type="entry name" value="DTD-like"/>
    <property type="match status" value="1"/>
</dbReference>
<comment type="function">
    <text evidence="1">An aminoacyl-tRNA editing enzyme that deacylates mischarged D-aminoacyl-tRNAs. Also deacylates mischarged glycyl-tRNA(Ala), protecting cells against glycine mischarging by AlaRS. Acts via tRNA-based rather than protein-based catalysis; rejects L-amino acids rather than detecting D-amino acids in the active site. By recycling D-aminoacyl-tRNA to D-amino acids and free tRNA molecules, this enzyme counteracts the toxicity associated with the formation of D-aminoacyl-tRNA entities in vivo and helps enforce protein L-homochirality.</text>
</comment>
<comment type="catalytic activity">
    <reaction evidence="1">
        <text>glycyl-tRNA(Ala) + H2O = tRNA(Ala) + glycine + H(+)</text>
        <dbReference type="Rhea" id="RHEA:53744"/>
        <dbReference type="Rhea" id="RHEA-COMP:9657"/>
        <dbReference type="Rhea" id="RHEA-COMP:13640"/>
        <dbReference type="ChEBI" id="CHEBI:15377"/>
        <dbReference type="ChEBI" id="CHEBI:15378"/>
        <dbReference type="ChEBI" id="CHEBI:57305"/>
        <dbReference type="ChEBI" id="CHEBI:78442"/>
        <dbReference type="ChEBI" id="CHEBI:78522"/>
        <dbReference type="EC" id="3.1.1.96"/>
    </reaction>
</comment>
<comment type="catalytic activity">
    <reaction evidence="1">
        <text>a D-aminoacyl-tRNA + H2O = a tRNA + a D-alpha-amino acid + H(+)</text>
        <dbReference type="Rhea" id="RHEA:13953"/>
        <dbReference type="Rhea" id="RHEA-COMP:10123"/>
        <dbReference type="Rhea" id="RHEA-COMP:10124"/>
        <dbReference type="ChEBI" id="CHEBI:15377"/>
        <dbReference type="ChEBI" id="CHEBI:15378"/>
        <dbReference type="ChEBI" id="CHEBI:59871"/>
        <dbReference type="ChEBI" id="CHEBI:78442"/>
        <dbReference type="ChEBI" id="CHEBI:79333"/>
        <dbReference type="EC" id="3.1.1.96"/>
    </reaction>
</comment>
<comment type="subunit">
    <text evidence="1">Homodimer.</text>
</comment>
<comment type="subcellular location">
    <subcellularLocation>
        <location evidence="1">Cytoplasm</location>
    </subcellularLocation>
</comment>
<comment type="domain">
    <text evidence="1">A Gly-cisPro motif from one monomer fits into the active site of the other monomer to allow specific chiral rejection of L-amino acids.</text>
</comment>
<comment type="similarity">
    <text evidence="1">Belongs to the DTD family.</text>
</comment>